<comment type="function">
    <text evidence="4 5 6 10">Component of the large ribosomal subunit (PubMed:25601755, PubMed:26245381, PubMed:27863242, PubMed:30517857). The ribosome is a large ribonucleoprotein complex responsible for the synthesis of proteins in the cell (PubMed:25601755, PubMed:26245381, PubMed:27863242, PubMed:30517857).</text>
</comment>
<comment type="subunit">
    <text evidence="1 2 4 5 6 7 8 9 10 11 12 13 14 15">Component of the large ribosomal subunit (PubMed:25601755, PubMed:26245381, PubMed:27863242, PubMed:29856316, PubMed:30293783, PubMed:30355441, PubMed:30517857, PubMed:31246176, PubMed:31609474, PubMed:31768042, PubMed:33296660, PubMed:35679869). Interacts with CRY1 (By similarity).</text>
</comment>
<comment type="subcellular location">
    <subcellularLocation>
        <location evidence="4 5 6 7 8 9 10 11 12 13 14 15">Cytoplasm</location>
    </subcellularLocation>
</comment>
<comment type="PTM">
    <text evidence="1">Hydroxylated on His-216 by RIOX1. The modification is impaired by hypoxia.</text>
</comment>
<comment type="similarity">
    <text evidence="16">Belongs to the universal ribosomal protein uL2 family.</text>
</comment>
<gene>
    <name type="primary">RPL8</name>
</gene>
<feature type="initiator methionine" description="Removed" evidence="1">
    <location>
        <position position="1"/>
    </location>
</feature>
<feature type="chain" id="PRO_0000460093" description="Large ribosomal subunit protein uL2">
    <location>
        <begin position="2"/>
        <end position="257"/>
    </location>
</feature>
<feature type="region of interest" description="Disordered" evidence="3">
    <location>
        <begin position="207"/>
        <end position="232"/>
    </location>
</feature>
<feature type="modified residue" description="(3S)-3-hydroxyhistidine" evidence="1">
    <location>
        <position position="216"/>
    </location>
</feature>
<feature type="cross-link" description="Glycyl lysine isopeptide (Lys-Gly) (interchain with G-Cter in SUMO2)" evidence="1">
    <location>
        <position position="42"/>
    </location>
</feature>
<feature type="cross-link" description="Glycyl lysine isopeptide (Lys-Gly) (interchain with G-Cter in SUMO2)" evidence="1">
    <location>
        <position position="149"/>
    </location>
</feature>
<feature type="cross-link" description="Glycyl lysine isopeptide (Lys-Gly) (interchain with G-Cter in SUMO2)" evidence="1">
    <location>
        <position position="234"/>
    </location>
</feature>
<feature type="cross-link" description="Glycyl lysine isopeptide (Lys-Gly) (interchain with G-Cter in SUMO2)" evidence="1">
    <location>
        <position position="250"/>
    </location>
</feature>
<proteinExistence type="evidence at protein level"/>
<organism>
    <name type="scientific">Oryctolagus cuniculus</name>
    <name type="common">Rabbit</name>
    <dbReference type="NCBI Taxonomy" id="9986"/>
    <lineage>
        <taxon>Eukaryota</taxon>
        <taxon>Metazoa</taxon>
        <taxon>Chordata</taxon>
        <taxon>Craniata</taxon>
        <taxon>Vertebrata</taxon>
        <taxon>Euteleostomi</taxon>
        <taxon>Mammalia</taxon>
        <taxon>Eutheria</taxon>
        <taxon>Euarchontoglires</taxon>
        <taxon>Glires</taxon>
        <taxon>Lagomorpha</taxon>
        <taxon>Leporidae</taxon>
        <taxon>Oryctolagus</taxon>
    </lineage>
</organism>
<reference key="1">
    <citation type="journal article" date="2011" name="Nature">
        <title>A high-resolution map of human evolutionary constraint using 29 mammals.</title>
        <authorList>
            <person name="Lindblad-Toh K."/>
            <person name="Garber M."/>
            <person name="Zuk O."/>
            <person name="Lin M.F."/>
            <person name="Parker B.J."/>
            <person name="Washietl S."/>
            <person name="Kheradpour P."/>
            <person name="Ernst J."/>
            <person name="Jordan G."/>
            <person name="Mauceli E."/>
            <person name="Ward L.D."/>
            <person name="Lowe C.B."/>
            <person name="Holloway A.K."/>
            <person name="Clamp M."/>
            <person name="Gnerre S."/>
            <person name="Alfoldi J."/>
            <person name="Beal K."/>
            <person name="Chang J."/>
            <person name="Clawson H."/>
            <person name="Cuff J."/>
            <person name="Di Palma F."/>
            <person name="Fitzgerald S."/>
            <person name="Flicek P."/>
            <person name="Guttman M."/>
            <person name="Hubisz M.J."/>
            <person name="Jaffe D.B."/>
            <person name="Jungreis I."/>
            <person name="Kent W.J."/>
            <person name="Kostka D."/>
            <person name="Lara M."/>
            <person name="Martins A.L."/>
            <person name="Massingham T."/>
            <person name="Moltke I."/>
            <person name="Raney B.J."/>
            <person name="Rasmussen M.D."/>
            <person name="Robinson J."/>
            <person name="Stark A."/>
            <person name="Vilella A.J."/>
            <person name="Wen J."/>
            <person name="Xie X."/>
            <person name="Zody M.C."/>
            <person name="Baldwin J."/>
            <person name="Bloom T."/>
            <person name="Chin C.W."/>
            <person name="Heiman D."/>
            <person name="Nicol R."/>
            <person name="Nusbaum C."/>
            <person name="Young S."/>
            <person name="Wilkinson J."/>
            <person name="Worley K.C."/>
            <person name="Kovar C.L."/>
            <person name="Muzny D.M."/>
            <person name="Gibbs R.A."/>
            <person name="Cree A."/>
            <person name="Dihn H.H."/>
            <person name="Fowler G."/>
            <person name="Jhangiani S."/>
            <person name="Joshi V."/>
            <person name="Lee S."/>
            <person name="Lewis L.R."/>
            <person name="Nazareth L.V."/>
            <person name="Okwuonu G."/>
            <person name="Santibanez J."/>
            <person name="Warren W.C."/>
            <person name="Mardis E.R."/>
            <person name="Weinstock G.M."/>
            <person name="Wilson R.K."/>
            <person name="Delehaunty K."/>
            <person name="Dooling D."/>
            <person name="Fronik C."/>
            <person name="Fulton L."/>
            <person name="Fulton B."/>
            <person name="Graves T."/>
            <person name="Minx P."/>
            <person name="Sodergren E."/>
            <person name="Birney E."/>
            <person name="Margulies E.H."/>
            <person name="Herrero J."/>
            <person name="Green E.D."/>
            <person name="Haussler D."/>
            <person name="Siepel A."/>
            <person name="Goldman N."/>
            <person name="Pollard K.S."/>
            <person name="Pedersen J.S."/>
            <person name="Lander E.S."/>
            <person name="Kellis M."/>
        </authorList>
    </citation>
    <scope>NUCLEOTIDE SEQUENCE [LARGE SCALE GENOMIC DNA]</scope>
    <source>
        <strain>Thorbecke</strain>
    </source>
</reference>
<reference evidence="19" key="2">
    <citation type="journal article" date="2015" name="Mol. Cell">
        <title>Cryo-EM of ribosomal 80S complexes with termination factors reveals the translocated cricket paralysis virus IRES.</title>
        <authorList>
            <person name="Muhs M."/>
            <person name="Hilal T."/>
            <person name="Mielke T."/>
            <person name="Skabkin M.A."/>
            <person name="Sanbonmatsu K.Y."/>
            <person name="Pestova T.V."/>
            <person name="Spahn C.M."/>
        </authorList>
    </citation>
    <scope>STRUCTURE BY ELECTRON MICROSCOPY (9.00 ANGSTROMS) OF RIBOSOME</scope>
    <scope>FUNCTION</scope>
    <scope>SUBUNIT</scope>
    <scope>SUBCELLULAR LOCATION</scope>
</reference>
<reference evidence="17 18" key="3">
    <citation type="journal article" date="2015" name="Nature">
        <title>Structural basis for stop codon recognition in eukaryotes.</title>
        <authorList>
            <person name="Brown A."/>
            <person name="Shao S."/>
            <person name="Murray J."/>
            <person name="Hegde R.S."/>
            <person name="Ramakrishnan V."/>
        </authorList>
    </citation>
    <scope>STRUCTURE BY ELECTRON MICROSCOPY (3.45 ANGSTROMS) OF RIBOSOME</scope>
    <scope>FUNCTION</scope>
    <scope>SUBCELLULAR LOCATION</scope>
    <scope>SUBUNIT</scope>
</reference>
<reference evidence="20 21" key="4">
    <citation type="journal article" date="2016" name="Cell">
        <title>Decoding mammalian ribosome-mRNA states by translational GTPase complexes.</title>
        <authorList>
            <person name="Shao S."/>
            <person name="Murray J."/>
            <person name="Brown A."/>
            <person name="Taunton J."/>
            <person name="Ramakrishnan V."/>
            <person name="Hegde R.S."/>
        </authorList>
    </citation>
    <scope>STRUCTURE BY ELECTRON MICROSCOPY (3.31 ANGSTROMS) OF RIBOSOME</scope>
    <scope>FUNCTION</scope>
    <scope>SUBCELLULAR LOCATION</scope>
    <scope>SUBUNIT</scope>
</reference>
<reference evidence="24" key="5">
    <citation type="journal article" date="2018" name="Cell Rep.">
        <title>tRNA translocation by the eukaryotic 80S ribosome and the impact of GTP hydrolysis.</title>
        <authorList>
            <person name="Flis J."/>
            <person name="Holm M."/>
            <person name="Rundlet E.J."/>
            <person name="Loerke J."/>
            <person name="Hilal T."/>
            <person name="Dabrowski M."/>
            <person name="Burger J."/>
            <person name="Mielke T."/>
            <person name="Blanchard S.C."/>
            <person name="Spahn C.M.T."/>
            <person name="Budkevich T.V."/>
        </authorList>
    </citation>
    <scope>STRUCTURE BY ELECTRON MICROSCOPY (3.60 ANGSTROMS) OF RIBOSOME</scope>
    <scope>FUNCTION</scope>
    <scope>SUBCELLULAR LOCATION</scope>
    <scope>SUBUNIT</scope>
</reference>
<reference evidence="22 23" key="6">
    <citation type="journal article" date="2018" name="Elife">
        <title>Dual tRNA mimicry in the Cricket paralysis virus IRES uncovers an unexpected similarity with the Hepatitis C Virus IRES.</title>
        <authorList>
            <person name="Pisareva V.P."/>
            <person name="Pisarev A.V."/>
            <person name="Fernandez I.S."/>
        </authorList>
    </citation>
    <scope>STRUCTURE BY ELECTRON MICROSCOPY (3.20 ANGSTROMS) OF RIBOSOME</scope>
    <scope>SUBCELLULAR LOCATION</scope>
    <scope>SUBUNIT</scope>
</reference>
<reference evidence="26 27" key="7">
    <citation type="journal article" date="2018" name="Elife">
        <title>Structures of translationally inactive mammalian ribosomes.</title>
        <authorList>
            <person name="Brown A."/>
            <person name="Baird M.R."/>
            <person name="Yip M.C."/>
            <person name="Murray J."/>
            <person name="Shao S."/>
        </authorList>
    </citation>
    <scope>STRUCTURE BY ELECTRON MICROSCOPY (3.30 ANGSTROMS) OF 1-107 OF RIBOSOME</scope>
    <scope>SUBCELLULAR LOCATION</scope>
    <scope>SUBUNIT</scope>
</reference>
<reference evidence="25" key="8">
    <citation type="journal article" date="2018" name="Mol. Cell">
        <title>ZNF598 is a quality control sensor of collided ribosomes.</title>
        <authorList>
            <person name="Juszkiewicz S."/>
            <person name="Chandrasekaran V."/>
            <person name="Lin Z."/>
            <person name="Kraatz S."/>
            <person name="Ramakrishnan V."/>
            <person name="Hegde R.S."/>
        </authorList>
    </citation>
    <scope>STRUCTURE BY ELECTRON MICROSCOPY (3.80 ANGSTROMS) OF RIBOSOME</scope>
    <scope>SUBCELLULAR LOCATION</scope>
    <scope>SUBUNIT</scope>
</reference>
<reference evidence="30 31" key="9">
    <citation type="journal article" date="2019" name="Elife">
        <title>Structural and mutational analysis of the ribosome-arresting human XBP1u.</title>
        <authorList>
            <person name="Shanmuganathan V."/>
            <person name="Schiller N."/>
            <person name="Magoulopoulou A."/>
            <person name="Cheng J."/>
            <person name="Braunger K."/>
            <person name="Cymer F."/>
            <person name="Berninghausen O."/>
            <person name="Beatrix B."/>
            <person name="Kohno K."/>
            <person name="von Heijne G."/>
            <person name="Beckmann R."/>
        </authorList>
    </citation>
    <scope>STRUCTURE BY ELECTRON MICROSCOPY (3.00 ANGSTROMS) OF RIBOSOME</scope>
    <scope>SUBCELLULAR LOCATION</scope>
    <scope>SUBUNIT</scope>
</reference>
<reference evidence="28 29" key="10">
    <citation type="journal article" date="2019" name="EMBO J.">
        <title>The Israeli acute paralysis virus IRES captures host ribosomes by mimicking a ribosomal state with hybrid tRNAs.</title>
        <authorList>
            <person name="Acosta-Reyes F."/>
            <person name="Neupane R."/>
            <person name="Frank J."/>
            <person name="Fernandez I.S."/>
        </authorList>
    </citation>
    <scope>STRUCTURE BY ELECTRON MICROSCOPY (3.10 ANGSTROMS) OF RIBOSOME</scope>
    <scope>SUBUNIT</scope>
    <scope>SUBCELLULAR LOCATION</scope>
</reference>
<reference evidence="32" key="11">
    <citation type="journal article" date="2019" name="Nat. Struct. Mol. Biol.">
        <title>Mechanism of ribosome stalling during translation of a poly(A) tail.</title>
        <authorList>
            <person name="Chandrasekaran V."/>
            <person name="Juszkiewicz S."/>
            <person name="Choi J."/>
            <person name="Puglisi J.D."/>
            <person name="Brown A."/>
            <person name="Shao S."/>
            <person name="Ramakrishnan V."/>
            <person name="Hegde R.S."/>
        </authorList>
    </citation>
    <scope>STRUCTURE BY ELECTRON MICROSCOPY (2.80 ANGSTROMS) OF RIBOSOME</scope>
    <scope>SUBCELLULAR LOCATION</scope>
    <scope>SUBUNIT</scope>
</reference>
<reference evidence="33 34" key="12">
    <citation type="journal article" date="2020" name="Cell Rep.">
        <title>The Halastavi arva virus intergenic region IRES promotes translation by the simplest possible initiation mechanism.</title>
        <authorList>
            <person name="Abaeva I.S."/>
            <person name="Vicens Q."/>
            <person name="Bochler A."/>
            <person name="Soufari H."/>
            <person name="Simonetti A."/>
            <person name="Pestova T.V."/>
            <person name="Hashem Y."/>
            <person name="Hellen C.U.T."/>
        </authorList>
    </citation>
    <scope>STRUCTURE BY ELECTRON MICROSCOPY (3.49 ANGSTROMS) OF RIBOSOME</scope>
    <scope>SUBCELLULAR LOCATION</scope>
    <scope>SUBUNIT</scope>
</reference>
<reference evidence="35 36" key="13">
    <citation type="journal article" date="2022" name="Mol. Cell">
        <title>Direct epitranscriptomic regulation of mammalian translation initiation through N4-acetylcytidine.</title>
        <authorList>
            <person name="Arango D."/>
            <person name="Sturgill D."/>
            <person name="Yang R."/>
            <person name="Kanai T."/>
            <person name="Bauer P."/>
            <person name="Roy J."/>
            <person name="Wang Z."/>
            <person name="Hosogane M."/>
            <person name="Schiffers S."/>
            <person name="Oberdoerffer S."/>
        </authorList>
    </citation>
    <scope>STRUCTURE BY ELECTRON MICROSCOPY (2.80 ANGSTROMS) OF RIBOSOME</scope>
    <scope>SUBCELLULAR LOCATION</scope>
    <scope>SUBUNIT</scope>
</reference>
<keyword id="KW-0002">3D-structure</keyword>
<keyword id="KW-0963">Cytoplasm</keyword>
<keyword id="KW-0379">Hydroxylation</keyword>
<keyword id="KW-1017">Isopeptide bond</keyword>
<keyword id="KW-1185">Reference proteome</keyword>
<keyword id="KW-0687">Ribonucleoprotein</keyword>
<keyword id="KW-0689">Ribosomal protein</keyword>
<keyword id="KW-0694">RNA-binding</keyword>
<keyword id="KW-0699">rRNA-binding</keyword>
<keyword id="KW-0832">Ubl conjugation</keyword>
<sequence length="257" mass="28025">MGRVIRGQRKGAGSVFRAHVKHRKGAARLRAVDFAERHGYIKGIVKDIIHDPGRGAPLAKVVFRDPYRFKKRTELFIAAEGIHTGQFVYCGKKAQLNIGNVLPVGTMPEGTIVCCLEEKPGDRGKLARASGNYATVISHNPETKKTRVKLPSGSKKVISSANRAVVGVVAGGGRIDKPILKAGRAYHKYKAKRNCWPRVRGVAMNPVEHPFGGGNHQHIGKPSTIRRDAPAGRKVGLIAARRTGRLRGTKTVQEKEN</sequence>
<evidence type="ECO:0000250" key="1">
    <source>
        <dbReference type="UniProtKB" id="P62917"/>
    </source>
</evidence>
<evidence type="ECO:0000250" key="2">
    <source>
        <dbReference type="UniProtKB" id="P62918"/>
    </source>
</evidence>
<evidence type="ECO:0000256" key="3">
    <source>
        <dbReference type="SAM" id="MobiDB-lite"/>
    </source>
</evidence>
<evidence type="ECO:0000269" key="4">
    <source>
    </source>
</evidence>
<evidence type="ECO:0000269" key="5">
    <source>
    </source>
</evidence>
<evidence type="ECO:0000269" key="6">
    <source>
    </source>
</evidence>
<evidence type="ECO:0000269" key="7">
    <source>
    </source>
</evidence>
<evidence type="ECO:0000269" key="8">
    <source>
    </source>
</evidence>
<evidence type="ECO:0000269" key="9">
    <source>
    </source>
</evidence>
<evidence type="ECO:0000269" key="10">
    <source>
    </source>
</evidence>
<evidence type="ECO:0000269" key="11">
    <source>
    </source>
</evidence>
<evidence type="ECO:0000269" key="12">
    <source>
    </source>
</evidence>
<evidence type="ECO:0000269" key="13">
    <source>
    </source>
</evidence>
<evidence type="ECO:0000269" key="14">
    <source>
    </source>
</evidence>
<evidence type="ECO:0000269" key="15">
    <source>
    </source>
</evidence>
<evidence type="ECO:0000305" key="16"/>
<evidence type="ECO:0007744" key="17">
    <source>
        <dbReference type="PDB" id="3JAG"/>
    </source>
</evidence>
<evidence type="ECO:0007744" key="18">
    <source>
        <dbReference type="PDB" id="3JAH"/>
    </source>
</evidence>
<evidence type="ECO:0007744" key="19">
    <source>
        <dbReference type="PDB" id="4D5Y"/>
    </source>
</evidence>
<evidence type="ECO:0007744" key="20">
    <source>
        <dbReference type="PDB" id="5LZS"/>
    </source>
</evidence>
<evidence type="ECO:0007744" key="21">
    <source>
        <dbReference type="PDB" id="5LZT"/>
    </source>
</evidence>
<evidence type="ECO:0007744" key="22">
    <source>
        <dbReference type="PDB" id="6D90"/>
    </source>
</evidence>
<evidence type="ECO:0007744" key="23">
    <source>
        <dbReference type="PDB" id="6D9J"/>
    </source>
</evidence>
<evidence type="ECO:0007744" key="24">
    <source>
        <dbReference type="PDB" id="6GZ3"/>
    </source>
</evidence>
<evidence type="ECO:0007744" key="25">
    <source>
        <dbReference type="PDB" id="6HCM"/>
    </source>
</evidence>
<evidence type="ECO:0007744" key="26">
    <source>
        <dbReference type="PDB" id="6MTB"/>
    </source>
</evidence>
<evidence type="ECO:0007744" key="27">
    <source>
        <dbReference type="PDB" id="6MTC"/>
    </source>
</evidence>
<evidence type="ECO:0007744" key="28">
    <source>
        <dbReference type="PDB" id="6P5I"/>
    </source>
</evidence>
<evidence type="ECO:0007744" key="29">
    <source>
        <dbReference type="PDB" id="6P5J"/>
    </source>
</evidence>
<evidence type="ECO:0007744" key="30">
    <source>
        <dbReference type="PDB" id="6R5Q"/>
    </source>
</evidence>
<evidence type="ECO:0007744" key="31">
    <source>
        <dbReference type="PDB" id="6R6G"/>
    </source>
</evidence>
<evidence type="ECO:0007744" key="32">
    <source>
        <dbReference type="PDB" id="6SGC"/>
    </source>
</evidence>
<evidence type="ECO:0007744" key="33">
    <source>
        <dbReference type="PDB" id="6ZVK"/>
    </source>
</evidence>
<evidence type="ECO:0007744" key="34">
    <source>
        <dbReference type="PDB" id="7A01"/>
    </source>
</evidence>
<evidence type="ECO:0007744" key="35">
    <source>
        <dbReference type="PDB" id="7UCJ"/>
    </source>
</evidence>
<evidence type="ECO:0007744" key="36">
    <source>
        <dbReference type="PDB" id="7UCK"/>
    </source>
</evidence>
<dbReference type="RefSeq" id="XP_002723515.1">
    <property type="nucleotide sequence ID" value="XM_002723469.5"/>
</dbReference>
<dbReference type="PDB" id="3JAG">
    <property type="method" value="EM"/>
    <property type="resolution" value="3.65 A"/>
    <property type="chains" value="A=2-257"/>
</dbReference>
<dbReference type="PDB" id="3JAH">
    <property type="method" value="EM"/>
    <property type="resolution" value="3.45 A"/>
    <property type="chains" value="A=2-257"/>
</dbReference>
<dbReference type="PDB" id="3JAI">
    <property type="method" value="EM"/>
    <property type="resolution" value="3.65 A"/>
    <property type="chains" value="A=2-257"/>
</dbReference>
<dbReference type="PDB" id="4D5Y">
    <property type="method" value="EM"/>
    <property type="resolution" value="9.00 A"/>
    <property type="chains" value="A=1-257"/>
</dbReference>
<dbReference type="PDB" id="5LZS">
    <property type="method" value="EM"/>
    <property type="resolution" value="3.31 A"/>
    <property type="chains" value="A=1-257"/>
</dbReference>
<dbReference type="PDB" id="5LZT">
    <property type="method" value="EM"/>
    <property type="resolution" value="3.65 A"/>
    <property type="chains" value="A=1-257"/>
</dbReference>
<dbReference type="PDB" id="5LZU">
    <property type="method" value="EM"/>
    <property type="resolution" value="3.75 A"/>
    <property type="chains" value="A=1-257"/>
</dbReference>
<dbReference type="PDB" id="5LZV">
    <property type="method" value="EM"/>
    <property type="resolution" value="3.35 A"/>
    <property type="chains" value="A=1-257"/>
</dbReference>
<dbReference type="PDB" id="5LZW">
    <property type="method" value="EM"/>
    <property type="resolution" value="3.53 A"/>
    <property type="chains" value="A=1-257"/>
</dbReference>
<dbReference type="PDB" id="5LZY">
    <property type="method" value="EM"/>
    <property type="resolution" value="3.99 A"/>
    <property type="chains" value="A=1-257"/>
</dbReference>
<dbReference type="PDB" id="5LZZ">
    <property type="method" value="EM"/>
    <property type="resolution" value="3.47 A"/>
    <property type="chains" value="A=1-257"/>
</dbReference>
<dbReference type="PDB" id="6D90">
    <property type="method" value="EM"/>
    <property type="resolution" value="3.20 A"/>
    <property type="chains" value="A=1-257"/>
</dbReference>
<dbReference type="PDB" id="6D9J">
    <property type="method" value="EM"/>
    <property type="resolution" value="3.20 A"/>
    <property type="chains" value="A=1-257"/>
</dbReference>
<dbReference type="PDB" id="6FTG">
    <property type="method" value="EM"/>
    <property type="resolution" value="9.10 A"/>
    <property type="chains" value="A=2-257"/>
</dbReference>
<dbReference type="PDB" id="6FTI">
    <property type="method" value="EM"/>
    <property type="resolution" value="4.20 A"/>
    <property type="chains" value="A=2-257"/>
</dbReference>
<dbReference type="PDB" id="6FTJ">
    <property type="method" value="EM"/>
    <property type="resolution" value="4.70 A"/>
    <property type="chains" value="A=2-257"/>
</dbReference>
<dbReference type="PDB" id="6GZ3">
    <property type="method" value="EM"/>
    <property type="resolution" value="3.60 A"/>
    <property type="chains" value="AA=2-257"/>
</dbReference>
<dbReference type="PDB" id="6HCF">
    <property type="method" value="EM"/>
    <property type="resolution" value="3.90 A"/>
    <property type="chains" value="A3=1-257"/>
</dbReference>
<dbReference type="PDB" id="6HCJ">
    <property type="method" value="EM"/>
    <property type="resolution" value="3.80 A"/>
    <property type="chains" value="A3=1-257"/>
</dbReference>
<dbReference type="PDB" id="6HCM">
    <property type="method" value="EM"/>
    <property type="resolution" value="6.80 A"/>
    <property type="chains" value="A3=1-257"/>
</dbReference>
<dbReference type="PDB" id="6HCQ">
    <property type="method" value="EM"/>
    <property type="resolution" value="6.50 A"/>
    <property type="chains" value="A3=1-257"/>
</dbReference>
<dbReference type="PDB" id="6MTB">
    <property type="method" value="EM"/>
    <property type="resolution" value="3.60 A"/>
    <property type="chains" value="A=2-257"/>
</dbReference>
<dbReference type="PDB" id="6MTC">
    <property type="method" value="EM"/>
    <property type="resolution" value="3.40 A"/>
    <property type="chains" value="A=2-257"/>
</dbReference>
<dbReference type="PDB" id="6MTD">
    <property type="method" value="EM"/>
    <property type="resolution" value="3.30 A"/>
    <property type="chains" value="A=2-257"/>
</dbReference>
<dbReference type="PDB" id="6MTE">
    <property type="method" value="EM"/>
    <property type="resolution" value="3.40 A"/>
    <property type="chains" value="A=2-257"/>
</dbReference>
<dbReference type="PDB" id="6P5I">
    <property type="method" value="EM"/>
    <property type="resolution" value="3.10 A"/>
    <property type="chains" value="AA=1-257"/>
</dbReference>
<dbReference type="PDB" id="6P5J">
    <property type="method" value="EM"/>
    <property type="resolution" value="3.10 A"/>
    <property type="chains" value="AA=1-257"/>
</dbReference>
<dbReference type="PDB" id="6P5K">
    <property type="method" value="EM"/>
    <property type="resolution" value="3.10 A"/>
    <property type="chains" value="AA=1-257"/>
</dbReference>
<dbReference type="PDB" id="6P5N">
    <property type="method" value="EM"/>
    <property type="resolution" value="3.20 A"/>
    <property type="chains" value="AA=1-257"/>
</dbReference>
<dbReference type="PDB" id="6R5Q">
    <property type="method" value="EM"/>
    <property type="resolution" value="3.00 A"/>
    <property type="chains" value="A=2-257"/>
</dbReference>
<dbReference type="PDB" id="6R6G">
    <property type="method" value="EM"/>
    <property type="resolution" value="3.70 A"/>
    <property type="chains" value="A=2-257"/>
</dbReference>
<dbReference type="PDB" id="6R6P">
    <property type="method" value="EM"/>
    <property type="resolution" value="3.10 A"/>
    <property type="chains" value="A=2-257"/>
</dbReference>
<dbReference type="PDB" id="6R7Q">
    <property type="method" value="EM"/>
    <property type="resolution" value="3.90 A"/>
    <property type="chains" value="A=2-257"/>
</dbReference>
<dbReference type="PDB" id="6SGC">
    <property type="method" value="EM"/>
    <property type="resolution" value="2.80 A"/>
    <property type="chains" value="A2=1-257"/>
</dbReference>
<dbReference type="PDB" id="6T59">
    <property type="method" value="EM"/>
    <property type="resolution" value="3.11 A"/>
    <property type="chains" value="A3=1-257"/>
</dbReference>
<dbReference type="PDB" id="6ZVK">
    <property type="method" value="EM"/>
    <property type="resolution" value="3.49 A"/>
    <property type="chains" value="92=2-257"/>
</dbReference>
<dbReference type="PDB" id="7A01">
    <property type="method" value="EM"/>
    <property type="resolution" value="3.60 A"/>
    <property type="chains" value="92=2-257"/>
</dbReference>
<dbReference type="PDB" id="7MDZ">
    <property type="method" value="EM"/>
    <property type="resolution" value="3.20 A"/>
    <property type="chains" value="A=1-257"/>
</dbReference>
<dbReference type="PDB" id="7NWI">
    <property type="method" value="EM"/>
    <property type="resolution" value="3.13 A"/>
    <property type="chains" value="A=2-257"/>
</dbReference>
<dbReference type="PDB" id="7QWQ">
    <property type="method" value="EM"/>
    <property type="resolution" value="2.83 A"/>
    <property type="chains" value="A=2-257"/>
</dbReference>
<dbReference type="PDB" id="7TM3">
    <property type="method" value="EM"/>
    <property type="resolution" value="3.25 A"/>
    <property type="chains" value="A=1-257"/>
</dbReference>
<dbReference type="PDB" id="7TOR">
    <property type="method" value="EM"/>
    <property type="resolution" value="2.90 A"/>
    <property type="chains" value="AL02=2-257"/>
</dbReference>
<dbReference type="PDB" id="7TUT">
    <property type="method" value="EM"/>
    <property type="resolution" value="3.88 A"/>
    <property type="chains" value="A=1-257"/>
</dbReference>
<dbReference type="PDB" id="7UCJ">
    <property type="method" value="EM"/>
    <property type="resolution" value="3.10 A"/>
    <property type="chains" value="A=2-257"/>
</dbReference>
<dbReference type="PDB" id="7UCK">
    <property type="method" value="EM"/>
    <property type="resolution" value="2.80 A"/>
    <property type="chains" value="A=2-257"/>
</dbReference>
<dbReference type="PDB" id="8B5L">
    <property type="method" value="EM"/>
    <property type="resolution" value="2.86 A"/>
    <property type="chains" value="A=1-257"/>
</dbReference>
<dbReference type="PDB" id="8B6C">
    <property type="method" value="EM"/>
    <property type="resolution" value="2.79 A"/>
    <property type="chains" value="A=1-257"/>
</dbReference>
<dbReference type="PDB" id="8RJB">
    <property type="method" value="EM"/>
    <property type="resolution" value="2.69 A"/>
    <property type="chains" value="A=1-217"/>
</dbReference>
<dbReference type="PDB" id="8RJC">
    <property type="method" value="EM"/>
    <property type="resolution" value="2.90 A"/>
    <property type="chains" value="A=1-217"/>
</dbReference>
<dbReference type="PDB" id="8RJD">
    <property type="method" value="EM"/>
    <property type="resolution" value="2.79 A"/>
    <property type="chains" value="A=1-217"/>
</dbReference>
<dbReference type="PDB" id="8SCB">
    <property type="method" value="EM"/>
    <property type="resolution" value="2.50 A"/>
    <property type="chains" value="A=1-217"/>
</dbReference>
<dbReference type="PDB" id="8VFT">
    <property type="method" value="EM"/>
    <property type="resolution" value="3.30 A"/>
    <property type="chains" value="A=1-257"/>
</dbReference>
<dbReference type="PDB" id="9BDL">
    <property type="method" value="EM"/>
    <property type="resolution" value="2.80 A"/>
    <property type="chains" value="AL02=2-249"/>
</dbReference>
<dbReference type="PDB" id="9BDN">
    <property type="method" value="EM"/>
    <property type="resolution" value="3.10 A"/>
    <property type="chains" value="AL02=2-249"/>
</dbReference>
<dbReference type="PDB" id="9BDP">
    <property type="method" value="EM"/>
    <property type="resolution" value="3.70 A"/>
    <property type="chains" value="AL02=2-249"/>
</dbReference>
<dbReference type="PDB" id="9F1B">
    <property type="method" value="EM"/>
    <property type="resolution" value="3.01 A"/>
    <property type="chains" value="BA=1-257"/>
</dbReference>
<dbReference type="PDB" id="9F1C">
    <property type="method" value="EM"/>
    <property type="resolution" value="3.78 A"/>
    <property type="chains" value="BA=1-257"/>
</dbReference>
<dbReference type="PDB" id="9F1D">
    <property type="method" value="EM"/>
    <property type="resolution" value="3.26 A"/>
    <property type="chains" value="BA=1-257"/>
</dbReference>
<dbReference type="PDBsum" id="3JAG"/>
<dbReference type="PDBsum" id="3JAH"/>
<dbReference type="PDBsum" id="3JAI"/>
<dbReference type="PDBsum" id="4D5Y"/>
<dbReference type="PDBsum" id="5LZS"/>
<dbReference type="PDBsum" id="5LZT"/>
<dbReference type="PDBsum" id="5LZU"/>
<dbReference type="PDBsum" id="5LZV"/>
<dbReference type="PDBsum" id="5LZW"/>
<dbReference type="PDBsum" id="5LZY"/>
<dbReference type="PDBsum" id="5LZZ"/>
<dbReference type="PDBsum" id="6D90"/>
<dbReference type="PDBsum" id="6D9J"/>
<dbReference type="PDBsum" id="6FTG"/>
<dbReference type="PDBsum" id="6FTI"/>
<dbReference type="PDBsum" id="6FTJ"/>
<dbReference type="PDBsum" id="6GZ3"/>
<dbReference type="PDBsum" id="6HCF"/>
<dbReference type="PDBsum" id="6HCJ"/>
<dbReference type="PDBsum" id="6HCM"/>
<dbReference type="PDBsum" id="6HCQ"/>
<dbReference type="PDBsum" id="6MTB"/>
<dbReference type="PDBsum" id="6MTC"/>
<dbReference type="PDBsum" id="6MTD"/>
<dbReference type="PDBsum" id="6MTE"/>
<dbReference type="PDBsum" id="6P5I"/>
<dbReference type="PDBsum" id="6P5J"/>
<dbReference type="PDBsum" id="6P5K"/>
<dbReference type="PDBsum" id="6P5N"/>
<dbReference type="PDBsum" id="6R5Q"/>
<dbReference type="PDBsum" id="6R6G"/>
<dbReference type="PDBsum" id="6R6P"/>
<dbReference type="PDBsum" id="6R7Q"/>
<dbReference type="PDBsum" id="6SGC"/>
<dbReference type="PDBsum" id="6T59"/>
<dbReference type="PDBsum" id="6ZVK"/>
<dbReference type="PDBsum" id="7A01"/>
<dbReference type="PDBsum" id="7MDZ"/>
<dbReference type="PDBsum" id="7NWI"/>
<dbReference type="PDBsum" id="7QWQ"/>
<dbReference type="PDBsum" id="7TM3"/>
<dbReference type="PDBsum" id="7TOR"/>
<dbReference type="PDBsum" id="7TUT"/>
<dbReference type="PDBsum" id="7UCJ"/>
<dbReference type="PDBsum" id="7UCK"/>
<dbReference type="PDBsum" id="8B5L"/>
<dbReference type="PDBsum" id="8B6C"/>
<dbReference type="PDBsum" id="8RJB"/>
<dbReference type="PDBsum" id="8RJC"/>
<dbReference type="PDBsum" id="8RJD"/>
<dbReference type="PDBsum" id="8SCB"/>
<dbReference type="PDBsum" id="8VFT"/>
<dbReference type="PDBsum" id="9BDL"/>
<dbReference type="PDBsum" id="9BDN"/>
<dbReference type="PDBsum" id="9BDP"/>
<dbReference type="PDBsum" id="9F1B"/>
<dbReference type="PDBsum" id="9F1C"/>
<dbReference type="PDBsum" id="9F1D"/>
<dbReference type="EMDB" id="EMD-0098"/>
<dbReference type="EMDB" id="EMD-0099"/>
<dbReference type="EMDB" id="EMD-0100"/>
<dbReference type="EMDB" id="EMD-0192"/>
<dbReference type="EMDB" id="EMD-0194"/>
<dbReference type="EMDB" id="EMD-0195"/>
<dbReference type="EMDB" id="EMD-0197"/>
<dbReference type="EMDB" id="EMD-10181"/>
<dbReference type="EMDB" id="EMD-10380"/>
<dbReference type="EMDB" id="EMD-11459"/>
<dbReference type="EMDB" id="EMD-11590"/>
<dbReference type="EMDB" id="EMD-12303"/>
<dbReference type="EMDB" id="EMD-12631"/>
<dbReference type="EMDB" id="EMD-12633"/>
<dbReference type="EMDB" id="EMD-14191"/>
<dbReference type="EMDB" id="EMD-15860"/>
<dbReference type="EMDB" id="EMD-15863"/>
<dbReference type="EMDB" id="EMD-19195"/>
<dbReference type="EMDB" id="EMD-19197"/>
<dbReference type="EMDB" id="EMD-19198"/>
<dbReference type="EMDB" id="EMD-20255"/>
<dbReference type="EMDB" id="EMD-20256"/>
<dbReference type="EMDB" id="EMD-20257"/>
<dbReference type="EMDB" id="EMD-20258"/>
<dbReference type="EMDB" id="EMD-23785"/>
<dbReference type="EMDB" id="EMD-25994"/>
<dbReference type="EMDB" id="EMD-26035"/>
<dbReference type="EMDB" id="EMD-26036"/>
<dbReference type="EMDB" id="EMD-26133"/>
<dbReference type="EMDB" id="EMD-26444"/>
<dbReference type="EMDB" id="EMD-26445"/>
<dbReference type="EMDB" id="EMD-40344"/>
<dbReference type="EMDB" id="EMD-4130"/>
<dbReference type="EMDB" id="EMD-4131"/>
<dbReference type="EMDB" id="EMD-4132"/>
<dbReference type="EMDB" id="EMD-4133"/>
<dbReference type="EMDB" id="EMD-4134"/>
<dbReference type="EMDB" id="EMD-4135"/>
<dbReference type="EMDB" id="EMD-4136"/>
<dbReference type="EMDB" id="EMD-4137"/>
<dbReference type="EMDB" id="EMD-4300"/>
<dbReference type="EMDB" id="EMD-4315"/>
<dbReference type="EMDB" id="EMD-4316"/>
<dbReference type="EMDB" id="EMD-4317"/>
<dbReference type="EMDB" id="EMD-43189"/>
<dbReference type="EMDB" id="EMD-44461"/>
<dbReference type="EMDB" id="EMD-44463"/>
<dbReference type="EMDB" id="EMD-44464"/>
<dbReference type="EMDB" id="EMD-4729"/>
<dbReference type="EMDB" id="EMD-4735"/>
<dbReference type="EMDB" id="EMD-4737"/>
<dbReference type="EMDB" id="EMD-4745"/>
<dbReference type="EMDB" id="EMD-50124"/>
<dbReference type="EMDB" id="EMD-50125"/>
<dbReference type="EMDB" id="EMD-50126"/>
<dbReference type="EMDB" id="EMD-7834"/>
<dbReference type="EMDB" id="EMD-7836"/>
<dbReference type="EMDB" id="EMD-9237"/>
<dbReference type="EMDB" id="EMD-9239"/>
<dbReference type="EMDB" id="EMD-9240"/>
<dbReference type="EMDB" id="EMD-9242"/>
<dbReference type="SMR" id="G1TT27"/>
<dbReference type="IntAct" id="G1TT27">
    <property type="interactions" value="1"/>
</dbReference>
<dbReference type="GeneID" id="100356003"/>
<dbReference type="KEGG" id="ocu:100356003"/>
<dbReference type="CTD" id="6132"/>
<dbReference type="eggNOG" id="KOG2309">
    <property type="taxonomic scope" value="Eukaryota"/>
</dbReference>
<dbReference type="HOGENOM" id="CLU_036235_0_3_1"/>
<dbReference type="OMA" id="GGRHPCT"/>
<dbReference type="TreeFam" id="TF300748"/>
<dbReference type="Proteomes" id="UP000001811">
    <property type="component" value="Unplaced"/>
</dbReference>
<dbReference type="Bgee" id="ENSOCUG00000024716">
    <property type="expression patterns" value="Expressed in uterus and 17 other cell types or tissues"/>
</dbReference>
<dbReference type="GO" id="GO:0022625">
    <property type="term" value="C:cytosolic large ribosomal subunit"/>
    <property type="evidence" value="ECO:0007669"/>
    <property type="project" value="TreeGrafter"/>
</dbReference>
<dbReference type="GO" id="GO:0019843">
    <property type="term" value="F:rRNA binding"/>
    <property type="evidence" value="ECO:0007669"/>
    <property type="project" value="UniProtKB-KW"/>
</dbReference>
<dbReference type="GO" id="GO:0003735">
    <property type="term" value="F:structural constituent of ribosome"/>
    <property type="evidence" value="ECO:0007669"/>
    <property type="project" value="InterPro"/>
</dbReference>
<dbReference type="GO" id="GO:0002181">
    <property type="term" value="P:cytoplasmic translation"/>
    <property type="evidence" value="ECO:0007669"/>
    <property type="project" value="TreeGrafter"/>
</dbReference>
<dbReference type="FunFam" id="4.10.950.10:FF:000002">
    <property type="entry name" value="60S ribosomal protein L2"/>
    <property type="match status" value="1"/>
</dbReference>
<dbReference type="FunFam" id="2.30.30.30:FF:000006">
    <property type="entry name" value="60S ribosomal protein L8"/>
    <property type="match status" value="1"/>
</dbReference>
<dbReference type="FunFam" id="2.40.50.140:FF:000581">
    <property type="entry name" value="Ribosomal protein L8"/>
    <property type="match status" value="1"/>
</dbReference>
<dbReference type="Gene3D" id="2.30.30.30">
    <property type="match status" value="1"/>
</dbReference>
<dbReference type="Gene3D" id="2.40.50.140">
    <property type="entry name" value="Nucleic acid-binding proteins"/>
    <property type="match status" value="1"/>
</dbReference>
<dbReference type="Gene3D" id="4.10.950.10">
    <property type="entry name" value="Ribosomal protein L2, domain 3"/>
    <property type="match status" value="1"/>
</dbReference>
<dbReference type="HAMAP" id="MF_01320_A">
    <property type="entry name" value="Ribosomal_uL2_A"/>
    <property type="match status" value="1"/>
</dbReference>
<dbReference type="InterPro" id="IPR012340">
    <property type="entry name" value="NA-bd_OB-fold"/>
</dbReference>
<dbReference type="InterPro" id="IPR014722">
    <property type="entry name" value="Rib_uL2_dom2"/>
</dbReference>
<dbReference type="InterPro" id="IPR002171">
    <property type="entry name" value="Ribosomal_uL2"/>
</dbReference>
<dbReference type="InterPro" id="IPR023672">
    <property type="entry name" value="Ribosomal_uL2_arc_euk"/>
</dbReference>
<dbReference type="InterPro" id="IPR022669">
    <property type="entry name" value="Ribosomal_uL2_C"/>
</dbReference>
<dbReference type="InterPro" id="IPR022671">
    <property type="entry name" value="Ribosomal_uL2_CS"/>
</dbReference>
<dbReference type="InterPro" id="IPR014726">
    <property type="entry name" value="Ribosomal_uL2_dom3"/>
</dbReference>
<dbReference type="InterPro" id="IPR022666">
    <property type="entry name" value="Ribosomal_uL2_RNA-bd_dom"/>
</dbReference>
<dbReference type="InterPro" id="IPR008991">
    <property type="entry name" value="Translation_prot_SH3-like_sf"/>
</dbReference>
<dbReference type="NCBIfam" id="NF007180">
    <property type="entry name" value="PRK09612.1"/>
    <property type="match status" value="1"/>
</dbReference>
<dbReference type="PANTHER" id="PTHR13691:SF16">
    <property type="entry name" value="LARGE RIBOSOMAL SUBUNIT PROTEIN UL2"/>
    <property type="match status" value="1"/>
</dbReference>
<dbReference type="PANTHER" id="PTHR13691">
    <property type="entry name" value="RIBOSOMAL PROTEIN L2"/>
    <property type="match status" value="1"/>
</dbReference>
<dbReference type="Pfam" id="PF00181">
    <property type="entry name" value="Ribosomal_L2"/>
    <property type="match status" value="1"/>
</dbReference>
<dbReference type="Pfam" id="PF03947">
    <property type="entry name" value="Ribosomal_L2_C"/>
    <property type="match status" value="1"/>
</dbReference>
<dbReference type="PIRSF" id="PIRSF002158">
    <property type="entry name" value="Ribosomal_L2"/>
    <property type="match status" value="1"/>
</dbReference>
<dbReference type="SMART" id="SM01383">
    <property type="entry name" value="Ribosomal_L2"/>
    <property type="match status" value="1"/>
</dbReference>
<dbReference type="SMART" id="SM01382">
    <property type="entry name" value="Ribosomal_L2_C"/>
    <property type="match status" value="1"/>
</dbReference>
<dbReference type="SUPFAM" id="SSF50249">
    <property type="entry name" value="Nucleic acid-binding proteins"/>
    <property type="match status" value="1"/>
</dbReference>
<dbReference type="SUPFAM" id="SSF50104">
    <property type="entry name" value="Translation proteins SH3-like domain"/>
    <property type="match status" value="1"/>
</dbReference>
<name>RL8_RABIT</name>
<protein>
    <recommendedName>
        <fullName>Large ribosomal subunit protein uL2</fullName>
    </recommendedName>
    <alternativeName>
        <fullName>60S ribosomal protein L8</fullName>
    </alternativeName>
</protein>
<accession>G1TT27</accession>